<proteinExistence type="inferred from homology"/>
<protein>
    <recommendedName>
        <fullName evidence="1">Glycine--tRNA ligase alpha subunit</fullName>
        <ecNumber evidence="1">6.1.1.14</ecNumber>
    </recommendedName>
    <alternativeName>
        <fullName evidence="1">Glycyl-tRNA synthetase alpha subunit</fullName>
        <shortName evidence="1">GlyRS</shortName>
    </alternativeName>
</protein>
<evidence type="ECO:0000255" key="1">
    <source>
        <dbReference type="HAMAP-Rule" id="MF_00254"/>
    </source>
</evidence>
<comment type="catalytic activity">
    <reaction evidence="1">
        <text>tRNA(Gly) + glycine + ATP = glycyl-tRNA(Gly) + AMP + diphosphate</text>
        <dbReference type="Rhea" id="RHEA:16013"/>
        <dbReference type="Rhea" id="RHEA-COMP:9664"/>
        <dbReference type="Rhea" id="RHEA-COMP:9683"/>
        <dbReference type="ChEBI" id="CHEBI:30616"/>
        <dbReference type="ChEBI" id="CHEBI:33019"/>
        <dbReference type="ChEBI" id="CHEBI:57305"/>
        <dbReference type="ChEBI" id="CHEBI:78442"/>
        <dbReference type="ChEBI" id="CHEBI:78522"/>
        <dbReference type="ChEBI" id="CHEBI:456215"/>
        <dbReference type="EC" id="6.1.1.14"/>
    </reaction>
</comment>
<comment type="subunit">
    <text evidence="1">Tetramer of two alpha and two beta subunits.</text>
</comment>
<comment type="subcellular location">
    <subcellularLocation>
        <location evidence="1">Cytoplasm</location>
    </subcellularLocation>
</comment>
<comment type="similarity">
    <text evidence="1">Belongs to the class-II aminoacyl-tRNA synthetase family.</text>
</comment>
<dbReference type="EC" id="6.1.1.14" evidence="1"/>
<dbReference type="EMBL" id="CP001020">
    <property type="protein sequence ID" value="ACJ19348.1"/>
    <property type="molecule type" value="Genomic_DNA"/>
</dbReference>
<dbReference type="RefSeq" id="WP_005769976.1">
    <property type="nucleotide sequence ID" value="NC_011528.1"/>
</dbReference>
<dbReference type="SMR" id="B6J8U0"/>
<dbReference type="KEGG" id="cbc:CbuK_0020"/>
<dbReference type="HOGENOM" id="CLU_057066_1_0_6"/>
<dbReference type="GO" id="GO:0005829">
    <property type="term" value="C:cytosol"/>
    <property type="evidence" value="ECO:0007669"/>
    <property type="project" value="TreeGrafter"/>
</dbReference>
<dbReference type="GO" id="GO:0005524">
    <property type="term" value="F:ATP binding"/>
    <property type="evidence" value="ECO:0007669"/>
    <property type="project" value="UniProtKB-UniRule"/>
</dbReference>
<dbReference type="GO" id="GO:0004820">
    <property type="term" value="F:glycine-tRNA ligase activity"/>
    <property type="evidence" value="ECO:0007669"/>
    <property type="project" value="UniProtKB-UniRule"/>
</dbReference>
<dbReference type="GO" id="GO:0006426">
    <property type="term" value="P:glycyl-tRNA aminoacylation"/>
    <property type="evidence" value="ECO:0007669"/>
    <property type="project" value="UniProtKB-UniRule"/>
</dbReference>
<dbReference type="CDD" id="cd00733">
    <property type="entry name" value="GlyRS_alpha_core"/>
    <property type="match status" value="1"/>
</dbReference>
<dbReference type="FunFam" id="3.30.930.10:FF:000006">
    <property type="entry name" value="Glycine--tRNA ligase alpha subunit"/>
    <property type="match status" value="1"/>
</dbReference>
<dbReference type="Gene3D" id="3.30.930.10">
    <property type="entry name" value="Bira Bifunctional Protein, Domain 2"/>
    <property type="match status" value="1"/>
</dbReference>
<dbReference type="Gene3D" id="1.20.58.180">
    <property type="entry name" value="Class II aaRS and biotin synthetases, domain 2"/>
    <property type="match status" value="1"/>
</dbReference>
<dbReference type="HAMAP" id="MF_00254">
    <property type="entry name" value="Gly_tRNA_synth_alpha"/>
    <property type="match status" value="1"/>
</dbReference>
<dbReference type="InterPro" id="IPR045864">
    <property type="entry name" value="aa-tRNA-synth_II/BPL/LPL"/>
</dbReference>
<dbReference type="InterPro" id="IPR006194">
    <property type="entry name" value="Gly-tRNA-synth_heterodimer"/>
</dbReference>
<dbReference type="InterPro" id="IPR002310">
    <property type="entry name" value="Gly-tRNA_ligase_asu"/>
</dbReference>
<dbReference type="NCBIfam" id="TIGR00388">
    <property type="entry name" value="glyQ"/>
    <property type="match status" value="1"/>
</dbReference>
<dbReference type="NCBIfam" id="NF006827">
    <property type="entry name" value="PRK09348.1"/>
    <property type="match status" value="1"/>
</dbReference>
<dbReference type="PANTHER" id="PTHR30075:SF2">
    <property type="entry name" value="GLYCINE--TRNA LIGASE, CHLOROPLASTIC_MITOCHONDRIAL 2"/>
    <property type="match status" value="1"/>
</dbReference>
<dbReference type="PANTHER" id="PTHR30075">
    <property type="entry name" value="GLYCYL-TRNA SYNTHETASE"/>
    <property type="match status" value="1"/>
</dbReference>
<dbReference type="Pfam" id="PF02091">
    <property type="entry name" value="tRNA-synt_2e"/>
    <property type="match status" value="1"/>
</dbReference>
<dbReference type="PRINTS" id="PR01044">
    <property type="entry name" value="TRNASYNTHGA"/>
</dbReference>
<dbReference type="SUPFAM" id="SSF55681">
    <property type="entry name" value="Class II aaRS and biotin synthetases"/>
    <property type="match status" value="1"/>
</dbReference>
<dbReference type="PROSITE" id="PS50861">
    <property type="entry name" value="AA_TRNA_LIGASE_II_GLYAB"/>
    <property type="match status" value="1"/>
</dbReference>
<accession>B6J8U0</accession>
<name>SYGA_COXB1</name>
<keyword id="KW-0030">Aminoacyl-tRNA synthetase</keyword>
<keyword id="KW-0067">ATP-binding</keyword>
<keyword id="KW-0963">Cytoplasm</keyword>
<keyword id="KW-0436">Ligase</keyword>
<keyword id="KW-0547">Nucleotide-binding</keyword>
<keyword id="KW-0648">Protein biosynthesis</keyword>
<feature type="chain" id="PRO_1000101178" description="Glycine--tRNA ligase alpha subunit">
    <location>
        <begin position="1"/>
        <end position="319"/>
    </location>
</feature>
<organism>
    <name type="scientific">Coxiella burnetii (strain CbuK_Q154)</name>
    <name type="common">Coxiella burnetii (strain Q154)</name>
    <dbReference type="NCBI Taxonomy" id="434924"/>
    <lineage>
        <taxon>Bacteria</taxon>
        <taxon>Pseudomonadati</taxon>
        <taxon>Pseudomonadota</taxon>
        <taxon>Gammaproteobacteria</taxon>
        <taxon>Legionellales</taxon>
        <taxon>Coxiellaceae</taxon>
        <taxon>Coxiella</taxon>
    </lineage>
</organism>
<reference key="1">
    <citation type="journal article" date="2009" name="Infect. Immun.">
        <title>Comparative genomics reveal extensive transposon-mediated genomic plasticity and diversity among potential effector proteins within the genus Coxiella.</title>
        <authorList>
            <person name="Beare P.A."/>
            <person name="Unsworth N."/>
            <person name="Andoh M."/>
            <person name="Voth D.E."/>
            <person name="Omsland A."/>
            <person name="Gilk S.D."/>
            <person name="Williams K.P."/>
            <person name="Sobral B.W."/>
            <person name="Kupko J.J. III"/>
            <person name="Porcella S.F."/>
            <person name="Samuel J.E."/>
            <person name="Heinzen R.A."/>
        </authorList>
    </citation>
    <scope>NUCLEOTIDE SEQUENCE [LARGE SCALE GENOMIC DNA]</scope>
    <source>
        <strain>CbuK_Q154</strain>
    </source>
</reference>
<gene>
    <name evidence="1" type="primary">glyQ</name>
    <name type="ordered locus">CbuK_0020</name>
</gene>
<sequence>MKSSHPVNFQQMILALQEYWASQGCVLLQPFDMEVGAGTFHPATFLRAIGPEPWRAAYVQPSRRPTDGRYGDNPNRTQHYYQFQVVLKPSPDDIQDIYLGSLKALGIDPLTHDIRFVEDNWEAPTLGSWGVGWEVWQDGMEITQFTYFQQIGGLECKPVTGEITYGLERLAMFLQGIDNMFDLVWTEGPNGRVTYGQIFQQNEVEMSAYNFEYANVEALFNFFDFYEKEASQLIEVHLPLAAYEMVLKASHTFNLLDARQAISVTERQRFILRVRKLAQAVAEAYYSAREKLGFPMLEEISSSSSRVLPLAGNDRVKGC</sequence>